<proteinExistence type="evidence at transcript level"/>
<gene>
    <name type="primary">DDX3Y</name>
</gene>
<reference key="1">
    <citation type="submission" date="2004-11" db="EMBL/GenBank/DDBJ databases">
        <authorList>
            <consortium name="The German cDNA consortium"/>
        </authorList>
    </citation>
    <scope>NUCLEOTIDE SEQUENCE [LARGE SCALE MRNA]</scope>
    <source>
        <tissue>Kidney</tissue>
    </source>
</reference>
<evidence type="ECO:0000250" key="1"/>
<evidence type="ECO:0000250" key="2">
    <source>
        <dbReference type="UniProtKB" id="O00571"/>
    </source>
</evidence>
<evidence type="ECO:0000250" key="3">
    <source>
        <dbReference type="UniProtKB" id="Q62095"/>
    </source>
</evidence>
<evidence type="ECO:0000250" key="4">
    <source>
        <dbReference type="UniProtKB" id="Q62167"/>
    </source>
</evidence>
<evidence type="ECO:0000255" key="5">
    <source>
        <dbReference type="PROSITE-ProRule" id="PRU00541"/>
    </source>
</evidence>
<evidence type="ECO:0000255" key="6">
    <source>
        <dbReference type="PROSITE-ProRule" id="PRU00542"/>
    </source>
</evidence>
<evidence type="ECO:0000256" key="7">
    <source>
        <dbReference type="SAM" id="MobiDB-lite"/>
    </source>
</evidence>
<evidence type="ECO:0000305" key="8"/>
<accession>Q5RF43</accession>
<protein>
    <recommendedName>
        <fullName>ATP-dependent RNA helicase DDX3Y</fullName>
        <ecNumber>3.6.4.13</ecNumber>
    </recommendedName>
    <alternativeName>
        <fullName>DEAD box protein 3, Y-chromosomal</fullName>
    </alternativeName>
</protein>
<sequence length="658" mass="73043">MSHVVVKNDPELDQQLANLDLNSEKQSGGASTASKGRYIPPHLRNREASKGFHDKDSSGWSCSKDKDAYSSFGSRDSRGKSGYFSERGSGSRGRFDDRGRSDYDGIGNRDRPGFGRFERSGHSRWCDKSDEDDWSKPLPPSERLEQELFSGGNTGINFEKYDDIPVEATGSNCPPHIENFSDIDMGEIIMGNIELTRYTRPTPVQKHAIPIIKGKRDLMACAQTGSGKTAAFLLPILSQIYTDGPGEALKAVKENGRYGRRKQYPISLVLAPTRELAVQIYEEARKFSYRSRVRPCVVYGGADIGQQIRDLERGCHLLVATPGRLVDMMERGKIGLDFCKYLVLDEADRMLDMGFEPQIRRIVEQDTMPPKGVRHTMMFSATFPKEIQMLARDFLDEYIFLAVGRVGSTSENITQKVVWVEDLDKRSFLLDLLGATGRDSLTLVFVETKKGADSLEDFLYHEGYACTSIHGDRSQRDREEALHQFRSGKSPILVATAVAARGLDISNVRHVINFDLPSDIEEYVHRIGRTGRVGNLGLATSFFNEKNMNITKDLLDLLVEAKQEVPSWLENMAYEHHYKGGSRGRSKRFSGGFGARDYRQSSGSSSSGFGASRGSSSRSGGSGYGNSRGFGGGGYGGFYNSDGYGGNYNSQGVDWWGN</sequence>
<comment type="function">
    <text evidence="1">Probable ATP-dependent RNA helicase. May play a role in spermatogenesis (By similarity).</text>
</comment>
<comment type="catalytic activity">
    <reaction>
        <text>ATP + H2O = ADP + phosphate + H(+)</text>
        <dbReference type="Rhea" id="RHEA:13065"/>
        <dbReference type="ChEBI" id="CHEBI:15377"/>
        <dbReference type="ChEBI" id="CHEBI:15378"/>
        <dbReference type="ChEBI" id="CHEBI:30616"/>
        <dbReference type="ChEBI" id="CHEBI:43474"/>
        <dbReference type="ChEBI" id="CHEBI:456216"/>
        <dbReference type="EC" id="3.6.4.13"/>
    </reaction>
</comment>
<comment type="subunit">
    <text evidence="1">May interact with TDRD3.</text>
</comment>
<comment type="subcellular location">
    <subcellularLocation>
        <location evidence="1">Cytoplasm</location>
    </subcellularLocation>
    <subcellularLocation>
        <location evidence="1">Nucleus</location>
    </subcellularLocation>
    <text evidence="1">Shuttles between the nucleus and the cytoplasm in an XPO1-dependent manner.</text>
</comment>
<comment type="similarity">
    <text evidence="8">Belongs to the DEAD box helicase family. DDX3/DED1 subfamily.</text>
</comment>
<dbReference type="EC" id="3.6.4.13"/>
<dbReference type="EMBL" id="CR857318">
    <property type="protein sequence ID" value="CAH89614.1"/>
    <property type="molecule type" value="mRNA"/>
</dbReference>
<dbReference type="RefSeq" id="NP_001124720.1">
    <property type="nucleotide sequence ID" value="NM_001131248.1"/>
</dbReference>
<dbReference type="RefSeq" id="XP_054401266.1">
    <property type="nucleotide sequence ID" value="XM_054545291.1"/>
</dbReference>
<dbReference type="SMR" id="Q5RF43"/>
<dbReference type="FunCoup" id="Q5RF43">
    <property type="interactions" value="862"/>
</dbReference>
<dbReference type="STRING" id="9601.ENSPPYP00000022671"/>
<dbReference type="GeneID" id="100171569"/>
<dbReference type="KEGG" id="pon:100171569"/>
<dbReference type="CTD" id="8653"/>
<dbReference type="eggNOG" id="KOG0335">
    <property type="taxonomic scope" value="Eukaryota"/>
</dbReference>
<dbReference type="InParanoid" id="Q5RF43"/>
<dbReference type="OrthoDB" id="196131at2759"/>
<dbReference type="Proteomes" id="UP000001595">
    <property type="component" value="Unplaced"/>
</dbReference>
<dbReference type="GO" id="GO:0005737">
    <property type="term" value="C:cytoplasm"/>
    <property type="evidence" value="ECO:0007669"/>
    <property type="project" value="UniProtKB-SubCell"/>
</dbReference>
<dbReference type="GO" id="GO:0005634">
    <property type="term" value="C:nucleus"/>
    <property type="evidence" value="ECO:0007669"/>
    <property type="project" value="UniProtKB-SubCell"/>
</dbReference>
<dbReference type="GO" id="GO:0005524">
    <property type="term" value="F:ATP binding"/>
    <property type="evidence" value="ECO:0007669"/>
    <property type="project" value="UniProtKB-KW"/>
</dbReference>
<dbReference type="GO" id="GO:0016887">
    <property type="term" value="F:ATP hydrolysis activity"/>
    <property type="evidence" value="ECO:0007669"/>
    <property type="project" value="RHEA"/>
</dbReference>
<dbReference type="GO" id="GO:0003677">
    <property type="term" value="F:DNA binding"/>
    <property type="evidence" value="ECO:0007669"/>
    <property type="project" value="UniProtKB-KW"/>
</dbReference>
<dbReference type="GO" id="GO:0003723">
    <property type="term" value="F:RNA binding"/>
    <property type="evidence" value="ECO:0007669"/>
    <property type="project" value="UniProtKB-KW"/>
</dbReference>
<dbReference type="GO" id="GO:0003724">
    <property type="term" value="F:RNA helicase activity"/>
    <property type="evidence" value="ECO:0007669"/>
    <property type="project" value="UniProtKB-EC"/>
</dbReference>
<dbReference type="CDD" id="cd18051">
    <property type="entry name" value="DEADc_DDX3"/>
    <property type="match status" value="1"/>
</dbReference>
<dbReference type="CDD" id="cd18787">
    <property type="entry name" value="SF2_C_DEAD"/>
    <property type="match status" value="1"/>
</dbReference>
<dbReference type="FunFam" id="3.40.50.300:FF:000160">
    <property type="entry name" value="ATP-dependent RNA helicase DDX3X"/>
    <property type="match status" value="1"/>
</dbReference>
<dbReference type="FunFam" id="3.40.50.300:FF:000008">
    <property type="entry name" value="ATP-dependent RNA helicase RhlB"/>
    <property type="match status" value="1"/>
</dbReference>
<dbReference type="Gene3D" id="3.40.50.300">
    <property type="entry name" value="P-loop containing nucleotide triphosphate hydrolases"/>
    <property type="match status" value="2"/>
</dbReference>
<dbReference type="InterPro" id="IPR011545">
    <property type="entry name" value="DEAD/DEAH_box_helicase_dom"/>
</dbReference>
<dbReference type="InterPro" id="IPR014001">
    <property type="entry name" value="Helicase_ATP-bd"/>
</dbReference>
<dbReference type="InterPro" id="IPR001650">
    <property type="entry name" value="Helicase_C-like"/>
</dbReference>
<dbReference type="InterPro" id="IPR027417">
    <property type="entry name" value="P-loop_NTPase"/>
</dbReference>
<dbReference type="InterPro" id="IPR000629">
    <property type="entry name" value="RNA-helicase_DEAD-box_CS"/>
</dbReference>
<dbReference type="InterPro" id="IPR014014">
    <property type="entry name" value="RNA_helicase_DEAD_Q_motif"/>
</dbReference>
<dbReference type="PANTHER" id="PTHR47958">
    <property type="entry name" value="ATP-DEPENDENT RNA HELICASE DBP3"/>
    <property type="match status" value="1"/>
</dbReference>
<dbReference type="Pfam" id="PF00270">
    <property type="entry name" value="DEAD"/>
    <property type="match status" value="1"/>
</dbReference>
<dbReference type="Pfam" id="PF00271">
    <property type="entry name" value="Helicase_C"/>
    <property type="match status" value="1"/>
</dbReference>
<dbReference type="SMART" id="SM00487">
    <property type="entry name" value="DEXDc"/>
    <property type="match status" value="1"/>
</dbReference>
<dbReference type="SMART" id="SM00490">
    <property type="entry name" value="HELICc"/>
    <property type="match status" value="1"/>
</dbReference>
<dbReference type="SUPFAM" id="SSF52540">
    <property type="entry name" value="P-loop containing nucleoside triphosphate hydrolases"/>
    <property type="match status" value="1"/>
</dbReference>
<dbReference type="PROSITE" id="PS00039">
    <property type="entry name" value="DEAD_ATP_HELICASE"/>
    <property type="match status" value="1"/>
</dbReference>
<dbReference type="PROSITE" id="PS51192">
    <property type="entry name" value="HELICASE_ATP_BIND_1"/>
    <property type="match status" value="1"/>
</dbReference>
<dbReference type="PROSITE" id="PS51194">
    <property type="entry name" value="HELICASE_CTER"/>
    <property type="match status" value="1"/>
</dbReference>
<dbReference type="PROSITE" id="PS51195">
    <property type="entry name" value="Q_MOTIF"/>
    <property type="match status" value="1"/>
</dbReference>
<name>DDX3Y_PONAB</name>
<feature type="initiator methionine" description="Removed" evidence="2">
    <location>
        <position position="1"/>
    </location>
</feature>
<feature type="chain" id="PRO_0000055014" description="ATP-dependent RNA helicase DDX3Y">
    <location>
        <begin position="2"/>
        <end position="658"/>
    </location>
</feature>
<feature type="domain" description="Helicase ATP-binding" evidence="5">
    <location>
        <begin position="209"/>
        <end position="401"/>
    </location>
</feature>
<feature type="domain" description="Helicase C-terminal" evidence="6">
    <location>
        <begin position="412"/>
        <end position="573"/>
    </location>
</feature>
<feature type="region of interest" description="Disordered" evidence="7">
    <location>
        <begin position="1"/>
        <end position="141"/>
    </location>
</feature>
<feature type="region of interest" description="Disordered" evidence="7">
    <location>
        <begin position="597"/>
        <end position="625"/>
    </location>
</feature>
<feature type="short sequence motif" description="Q motif">
    <location>
        <begin position="178"/>
        <end position="206"/>
    </location>
</feature>
<feature type="short sequence motif" description="DEAD box">
    <location>
        <begin position="345"/>
        <end position="348"/>
    </location>
</feature>
<feature type="compositionally biased region" description="Basic and acidic residues" evidence="7">
    <location>
        <begin position="1"/>
        <end position="10"/>
    </location>
</feature>
<feature type="compositionally biased region" description="Polar residues" evidence="7">
    <location>
        <begin position="15"/>
        <end position="34"/>
    </location>
</feature>
<feature type="compositionally biased region" description="Basic and acidic residues" evidence="7">
    <location>
        <begin position="44"/>
        <end position="68"/>
    </location>
</feature>
<feature type="compositionally biased region" description="Basic and acidic residues" evidence="7">
    <location>
        <begin position="93"/>
        <end position="128"/>
    </location>
</feature>
<feature type="compositionally biased region" description="Low complexity" evidence="7">
    <location>
        <begin position="601"/>
        <end position="619"/>
    </location>
</feature>
<feature type="binding site" evidence="5">
    <location>
        <begin position="198"/>
        <end position="205"/>
    </location>
    <ligand>
        <name>ATP</name>
        <dbReference type="ChEBI" id="CHEBI:30616"/>
    </ligand>
</feature>
<feature type="binding site" evidence="5">
    <location>
        <begin position="222"/>
        <end position="229"/>
    </location>
    <ligand>
        <name>ATP</name>
        <dbReference type="ChEBI" id="CHEBI:30616"/>
    </ligand>
</feature>
<feature type="modified residue" description="N-acetylserine" evidence="2">
    <location>
        <position position="2"/>
    </location>
</feature>
<feature type="modified residue" description="N6-acetyllysine" evidence="4">
    <location>
        <position position="55"/>
    </location>
</feature>
<feature type="modified residue" description="Phosphoserine" evidence="2">
    <location>
        <position position="81"/>
    </location>
</feature>
<feature type="modified residue" description="Phosphoserine" evidence="2">
    <location>
        <position position="85"/>
    </location>
</feature>
<feature type="modified residue" description="Phosphoserine" evidence="2">
    <location>
        <position position="89"/>
    </location>
</feature>
<feature type="modified residue" description="Omega-N-methylarginine" evidence="4">
    <location>
        <position position="100"/>
    </location>
</feature>
<feature type="modified residue" description="Phosphoserine" evidence="2">
    <location>
        <position position="101"/>
    </location>
</feature>
<feature type="modified residue" description="Phosphotyrosine" evidence="4">
    <location>
        <position position="103"/>
    </location>
</feature>
<feature type="modified residue" description="Omega-N-methylarginine" evidence="4">
    <location>
        <position position="109"/>
    </location>
</feature>
<feature type="modified residue" description="Phosphoserine" evidence="2">
    <location>
        <position position="129"/>
    </location>
</feature>
<feature type="modified residue" description="Phosphoserine" evidence="2">
    <location>
        <position position="181"/>
    </location>
</feature>
<feature type="modified residue" description="Phosphoserine" evidence="3">
    <location>
        <position position="454"/>
    </location>
</feature>
<feature type="modified residue" description="Omega-N-methylarginine" evidence="2">
    <location>
        <position position="588"/>
    </location>
</feature>
<feature type="modified residue" description="Phosphoserine" evidence="2">
    <location>
        <position position="590"/>
    </location>
</feature>
<feature type="modified residue" description="Phosphoserine" evidence="2">
    <location>
        <position position="601"/>
    </location>
</feature>
<feature type="modified residue" description="Omega-N-methylarginine" evidence="2">
    <location>
        <position position="613"/>
    </location>
</feature>
<feature type="modified residue" description="Omega-N-methylarginine" evidence="2">
    <location>
        <position position="628"/>
    </location>
</feature>
<feature type="cross-link" description="Glycyl lysine isopeptide (Lys-Gly) (interchain with G-Cter in SUMO2)" evidence="2">
    <location>
        <position position="213"/>
    </location>
</feature>
<organism>
    <name type="scientific">Pongo abelii</name>
    <name type="common">Sumatran orangutan</name>
    <name type="synonym">Pongo pygmaeus abelii</name>
    <dbReference type="NCBI Taxonomy" id="9601"/>
    <lineage>
        <taxon>Eukaryota</taxon>
        <taxon>Metazoa</taxon>
        <taxon>Chordata</taxon>
        <taxon>Craniata</taxon>
        <taxon>Vertebrata</taxon>
        <taxon>Euteleostomi</taxon>
        <taxon>Mammalia</taxon>
        <taxon>Eutheria</taxon>
        <taxon>Euarchontoglires</taxon>
        <taxon>Primates</taxon>
        <taxon>Haplorrhini</taxon>
        <taxon>Catarrhini</taxon>
        <taxon>Hominidae</taxon>
        <taxon>Pongo</taxon>
    </lineage>
</organism>
<keyword id="KW-0007">Acetylation</keyword>
<keyword id="KW-0067">ATP-binding</keyword>
<keyword id="KW-0963">Cytoplasm</keyword>
<keyword id="KW-0238">DNA-binding</keyword>
<keyword id="KW-0347">Helicase</keyword>
<keyword id="KW-0378">Hydrolase</keyword>
<keyword id="KW-1017">Isopeptide bond</keyword>
<keyword id="KW-0488">Methylation</keyword>
<keyword id="KW-0547">Nucleotide-binding</keyword>
<keyword id="KW-0539">Nucleus</keyword>
<keyword id="KW-0597">Phosphoprotein</keyword>
<keyword id="KW-1185">Reference proteome</keyword>
<keyword id="KW-0694">RNA-binding</keyword>
<keyword id="KW-0832">Ubl conjugation</keyword>